<protein>
    <recommendedName>
        <fullName>Arylacetamide deacetylase</fullName>
        <ecNumber>3.1.1.3</ecNumber>
    </recommendedName>
</protein>
<organism>
    <name type="scientific">Bos taurus</name>
    <name type="common">Bovine</name>
    <dbReference type="NCBI Taxonomy" id="9913"/>
    <lineage>
        <taxon>Eukaryota</taxon>
        <taxon>Metazoa</taxon>
        <taxon>Chordata</taxon>
        <taxon>Craniata</taxon>
        <taxon>Vertebrata</taxon>
        <taxon>Euteleostomi</taxon>
        <taxon>Mammalia</taxon>
        <taxon>Eutheria</taxon>
        <taxon>Laurasiatheria</taxon>
        <taxon>Artiodactyla</taxon>
        <taxon>Ruminantia</taxon>
        <taxon>Pecora</taxon>
        <taxon>Bovidae</taxon>
        <taxon>Bovinae</taxon>
        <taxon>Bos</taxon>
    </lineage>
</organism>
<dbReference type="EC" id="3.1.1.3"/>
<dbReference type="EMBL" id="BC120261">
    <property type="protein sequence ID" value="AAI20262.1"/>
    <property type="molecule type" value="mRNA"/>
</dbReference>
<dbReference type="RefSeq" id="NP_001069259.1">
    <property type="nucleotide sequence ID" value="NM_001075791.2"/>
</dbReference>
<dbReference type="SMR" id="Q0P5B7"/>
<dbReference type="FunCoup" id="Q0P5B7">
    <property type="interactions" value="40"/>
</dbReference>
<dbReference type="STRING" id="9913.ENSBTAP00000015373"/>
<dbReference type="ESTHER" id="bovin-aaad">
    <property type="family name" value="Arylacetamide_deacetylase"/>
</dbReference>
<dbReference type="GlyCosmos" id="Q0P5B7">
    <property type="glycosylation" value="1 site, No reported glycans"/>
</dbReference>
<dbReference type="GlyGen" id="Q0P5B7">
    <property type="glycosylation" value="1 site"/>
</dbReference>
<dbReference type="PaxDb" id="9913-ENSBTAP00000015373"/>
<dbReference type="PeptideAtlas" id="Q0P5B7"/>
<dbReference type="GeneID" id="519557"/>
<dbReference type="KEGG" id="bta:519557"/>
<dbReference type="CTD" id="13"/>
<dbReference type="eggNOG" id="KOG1515">
    <property type="taxonomic scope" value="Eukaryota"/>
</dbReference>
<dbReference type="InParanoid" id="Q0P5B7"/>
<dbReference type="OrthoDB" id="408631at2759"/>
<dbReference type="Proteomes" id="UP000009136">
    <property type="component" value="Unplaced"/>
</dbReference>
<dbReference type="GO" id="GO:0005789">
    <property type="term" value="C:endoplasmic reticulum membrane"/>
    <property type="evidence" value="ECO:0000318"/>
    <property type="project" value="GO_Central"/>
</dbReference>
<dbReference type="GO" id="GO:0017171">
    <property type="term" value="F:serine hydrolase activity"/>
    <property type="evidence" value="ECO:0000318"/>
    <property type="project" value="GO_Central"/>
</dbReference>
<dbReference type="GO" id="GO:0004806">
    <property type="term" value="F:triacylglycerol lipase activity"/>
    <property type="evidence" value="ECO:0000318"/>
    <property type="project" value="GO_Central"/>
</dbReference>
<dbReference type="GO" id="GO:0006629">
    <property type="term" value="P:lipid metabolic process"/>
    <property type="evidence" value="ECO:0007669"/>
    <property type="project" value="UniProtKB-KW"/>
</dbReference>
<dbReference type="GO" id="GO:0010898">
    <property type="term" value="P:positive regulation of triglyceride catabolic process"/>
    <property type="evidence" value="ECO:0000318"/>
    <property type="project" value="GO_Central"/>
</dbReference>
<dbReference type="Gene3D" id="3.40.50.1820">
    <property type="entry name" value="alpha/beta hydrolase"/>
    <property type="match status" value="1"/>
</dbReference>
<dbReference type="InterPro" id="IPR013094">
    <property type="entry name" value="AB_hydrolase_3"/>
</dbReference>
<dbReference type="InterPro" id="IPR029058">
    <property type="entry name" value="AB_hydrolase_fold"/>
</dbReference>
<dbReference type="InterPro" id="IPR017157">
    <property type="entry name" value="Arylacetamide_deacetylase"/>
</dbReference>
<dbReference type="InterPro" id="IPR050300">
    <property type="entry name" value="GDXG_lipolytic_enzyme"/>
</dbReference>
<dbReference type="InterPro" id="IPR033140">
    <property type="entry name" value="Lipase_GDXG_put_SER_AS"/>
</dbReference>
<dbReference type="PANTHER" id="PTHR48081">
    <property type="entry name" value="AB HYDROLASE SUPERFAMILY PROTEIN C4A8.06C"/>
    <property type="match status" value="1"/>
</dbReference>
<dbReference type="PANTHER" id="PTHR48081:SF28">
    <property type="entry name" value="ALPHA_BETA HYDROLASE FOLD-3 DOMAIN-CONTAINING PROTEIN"/>
    <property type="match status" value="1"/>
</dbReference>
<dbReference type="Pfam" id="PF07859">
    <property type="entry name" value="Abhydrolase_3"/>
    <property type="match status" value="2"/>
</dbReference>
<dbReference type="PIRSF" id="PIRSF037251">
    <property type="entry name" value="Arylacetamide_deacetylase"/>
    <property type="match status" value="1"/>
</dbReference>
<dbReference type="SUPFAM" id="SSF53474">
    <property type="entry name" value="alpha/beta-Hydrolases"/>
    <property type="match status" value="1"/>
</dbReference>
<dbReference type="PROSITE" id="PS01174">
    <property type="entry name" value="LIPASE_GDXG_SER"/>
    <property type="match status" value="1"/>
</dbReference>
<keyword id="KW-1015">Disulfide bond</keyword>
<keyword id="KW-0256">Endoplasmic reticulum</keyword>
<keyword id="KW-0325">Glycoprotein</keyword>
<keyword id="KW-0378">Hydrolase</keyword>
<keyword id="KW-0443">Lipid metabolism</keyword>
<keyword id="KW-0472">Membrane</keyword>
<keyword id="KW-0492">Microsome</keyword>
<keyword id="KW-1185">Reference proteome</keyword>
<keyword id="KW-0735">Signal-anchor</keyword>
<keyword id="KW-0812">Transmembrane</keyword>
<keyword id="KW-1133">Transmembrane helix</keyword>
<evidence type="ECO:0000250" key="1"/>
<evidence type="ECO:0000250" key="2">
    <source>
        <dbReference type="UniProtKB" id="Q5NUF3"/>
    </source>
</evidence>
<evidence type="ECO:0000255" key="3"/>
<evidence type="ECO:0000255" key="4">
    <source>
        <dbReference type="PROSITE-ProRule" id="PRU10038"/>
    </source>
</evidence>
<evidence type="ECO:0000305" key="5"/>
<name>AAAD_BOVIN</name>
<comment type="function">
    <text evidence="1">Displays cellular triglyceride lipase activity in liver, increases the levels of intracellular fatty acids derived from the hydrolysis of newly formed triglyceride stores and plays a role in very low-density lipoprotein assembly. Displays serine esterase activity in liver. Deacetylates a variety of arylacetamide substrates, including xenobiotic compounds and procarcinogens, converting them to the primary arylamide compounds and increasing their toxicity (By similarity).</text>
</comment>
<comment type="catalytic activity">
    <reaction>
        <text>a triacylglycerol + H2O = a diacylglycerol + a fatty acid + H(+)</text>
        <dbReference type="Rhea" id="RHEA:12044"/>
        <dbReference type="ChEBI" id="CHEBI:15377"/>
        <dbReference type="ChEBI" id="CHEBI:15378"/>
        <dbReference type="ChEBI" id="CHEBI:17855"/>
        <dbReference type="ChEBI" id="CHEBI:18035"/>
        <dbReference type="ChEBI" id="CHEBI:28868"/>
        <dbReference type="EC" id="3.1.1.3"/>
    </reaction>
</comment>
<comment type="subcellular location">
    <subcellularLocation>
        <location evidence="1">Endoplasmic reticulum membrane</location>
        <topology evidence="1">Single-pass type II membrane protein</topology>
    </subcellularLocation>
    <subcellularLocation>
        <location evidence="1">Microsome membrane</location>
        <topology evidence="1">Single-pass type II membrane protein</topology>
    </subcellularLocation>
</comment>
<comment type="similarity">
    <text evidence="5">Belongs to the 'GDXG' lipolytic enzyme family.</text>
</comment>
<gene>
    <name type="primary">AADAC</name>
</gene>
<feature type="chain" id="PRO_0000269569" description="Arylacetamide deacetylase">
    <location>
        <begin position="1"/>
        <end position="399"/>
    </location>
</feature>
<feature type="topological domain" description="Cytoplasmic" evidence="3">
    <location>
        <begin position="1"/>
        <end position="4"/>
    </location>
</feature>
<feature type="transmembrane region" description="Helical; Signal-anchor for type II membrane protein" evidence="3">
    <location>
        <begin position="5"/>
        <end position="25"/>
    </location>
</feature>
<feature type="topological domain" description="Lumenal" evidence="3">
    <location>
        <begin position="26"/>
        <end position="399"/>
    </location>
</feature>
<feature type="short sequence motif" description="Involved in the stabilization of the negatively charged intermediate by the formation of the oxyanion hole" evidence="2">
    <location>
        <begin position="111"/>
        <end position="113"/>
    </location>
</feature>
<feature type="active site" evidence="4">
    <location>
        <position position="189"/>
    </location>
</feature>
<feature type="active site" evidence="2">
    <location>
        <position position="343"/>
    </location>
</feature>
<feature type="active site" evidence="2">
    <location>
        <position position="373"/>
    </location>
</feature>
<feature type="glycosylation site" description="N-linked (GlcNAc...) asparagine" evidence="3">
    <location>
        <position position="282"/>
    </location>
</feature>
<feature type="disulfide bond" evidence="1">
    <location>
        <begin position="116"/>
        <end position="340"/>
    </location>
</feature>
<proteinExistence type="evidence at transcript level"/>
<sequence length="399" mass="45604">MRKKYFGFLILGVLLAGYIYVPLPDNVEEPWKIMLLNTFLKTSSYLALFGEILGLNHFMKSMALFSRIQGFPPTSDENIIVKDTTFNDIPVRIYVPQQKTKSLRRGLFYIHGGGWCFGSNDYYSYDLLSRWTAERLDAVVISTNYRLAPKYHFPVQFEDVYTALKWFLDPQNLESYGVDPGRIGISGDSAGGNLAAAVAQQLLEDPDVKIKLKVQTLIYPALQNFDFDLPSYRENAHYPVLSKSLMVRFWSEYFTTDRSLKKAMLSNQHIPLESSNLFKFVNWSSLLPEKFKKGHIYKTPTHGSSELAKKYPGILDVKASPLLADDSKLRGLPLTYVITCQYDVLRDDGLMYVTRLQKSGVQVIHNHVEGAFHGTLAFLFTKVGYRAANQYINWLHENL</sequence>
<accession>Q0P5B7</accession>
<reference key="1">
    <citation type="submission" date="2006-08" db="EMBL/GenBank/DDBJ databases">
        <authorList>
            <consortium name="NIH - Mammalian Gene Collection (MGC) project"/>
        </authorList>
    </citation>
    <scope>NUCLEOTIDE SEQUENCE [LARGE SCALE MRNA]</scope>
    <source>
        <strain>Hereford</strain>
        <tissue>Fetal liver</tissue>
    </source>
</reference>